<evidence type="ECO:0000250" key="1"/>
<evidence type="ECO:0000255" key="2">
    <source>
        <dbReference type="HAMAP-Rule" id="MF_00162"/>
    </source>
</evidence>
<keyword id="KW-0067">ATP-binding</keyword>
<keyword id="KW-0317">Glutathione biosynthesis</keyword>
<keyword id="KW-0436">Ligase</keyword>
<keyword id="KW-0460">Magnesium</keyword>
<keyword id="KW-0464">Manganese</keyword>
<keyword id="KW-0479">Metal-binding</keyword>
<keyword id="KW-0547">Nucleotide-binding</keyword>
<reference key="1">
    <citation type="journal article" date="2003" name="Lancet">
        <title>Genome sequence of Vibrio parahaemolyticus: a pathogenic mechanism distinct from that of V. cholerae.</title>
        <authorList>
            <person name="Makino K."/>
            <person name="Oshima K."/>
            <person name="Kurokawa K."/>
            <person name="Yokoyama K."/>
            <person name="Uda T."/>
            <person name="Tagomori K."/>
            <person name="Iijima Y."/>
            <person name="Najima M."/>
            <person name="Nakano M."/>
            <person name="Yamashita A."/>
            <person name="Kubota Y."/>
            <person name="Kimura S."/>
            <person name="Yasunaga T."/>
            <person name="Honda T."/>
            <person name="Shinagawa H."/>
            <person name="Hattori M."/>
            <person name="Iida T."/>
        </authorList>
    </citation>
    <scope>NUCLEOTIDE SEQUENCE [LARGE SCALE GENOMIC DNA]</scope>
    <source>
        <strain>RIMD 2210633</strain>
    </source>
</reference>
<dbReference type="EC" id="6.3.2.3" evidence="2"/>
<dbReference type="EMBL" id="BA000031">
    <property type="protein sequence ID" value="BAC60874.1"/>
    <property type="molecule type" value="Genomic_DNA"/>
</dbReference>
<dbReference type="RefSeq" id="NP_798990.1">
    <property type="nucleotide sequence ID" value="NC_004603.1"/>
</dbReference>
<dbReference type="RefSeq" id="WP_005482451.1">
    <property type="nucleotide sequence ID" value="NC_004603.1"/>
</dbReference>
<dbReference type="SMR" id="Q87LK1"/>
<dbReference type="GeneID" id="1190135"/>
<dbReference type="KEGG" id="vpa:VP2611"/>
<dbReference type="PATRIC" id="fig|223926.6.peg.2507"/>
<dbReference type="eggNOG" id="COG0189">
    <property type="taxonomic scope" value="Bacteria"/>
</dbReference>
<dbReference type="HOGENOM" id="CLU_068239_0_0_6"/>
<dbReference type="UniPathway" id="UPA00142">
    <property type="reaction ID" value="UER00210"/>
</dbReference>
<dbReference type="Proteomes" id="UP000002493">
    <property type="component" value="Chromosome 1"/>
</dbReference>
<dbReference type="GO" id="GO:0005737">
    <property type="term" value="C:cytoplasm"/>
    <property type="evidence" value="ECO:0007669"/>
    <property type="project" value="TreeGrafter"/>
</dbReference>
<dbReference type="GO" id="GO:0005524">
    <property type="term" value="F:ATP binding"/>
    <property type="evidence" value="ECO:0007669"/>
    <property type="project" value="UniProtKB-UniRule"/>
</dbReference>
<dbReference type="GO" id="GO:0004363">
    <property type="term" value="F:glutathione synthase activity"/>
    <property type="evidence" value="ECO:0007669"/>
    <property type="project" value="UniProtKB-UniRule"/>
</dbReference>
<dbReference type="GO" id="GO:0046872">
    <property type="term" value="F:metal ion binding"/>
    <property type="evidence" value="ECO:0007669"/>
    <property type="project" value="UniProtKB-KW"/>
</dbReference>
<dbReference type="FunFam" id="3.30.1490.20:FF:000009">
    <property type="entry name" value="Glutathione synthetase"/>
    <property type="match status" value="1"/>
</dbReference>
<dbReference type="FunFam" id="3.30.470.20:FF:000010">
    <property type="entry name" value="Glutathione synthetase"/>
    <property type="match status" value="1"/>
</dbReference>
<dbReference type="FunFam" id="3.40.50.20:FF:000009">
    <property type="entry name" value="Glutathione synthetase"/>
    <property type="match status" value="1"/>
</dbReference>
<dbReference type="Gene3D" id="3.40.50.20">
    <property type="match status" value="1"/>
</dbReference>
<dbReference type="Gene3D" id="3.30.1490.20">
    <property type="entry name" value="ATP-grasp fold, A domain"/>
    <property type="match status" value="1"/>
</dbReference>
<dbReference type="Gene3D" id="3.30.470.20">
    <property type="entry name" value="ATP-grasp fold, B domain"/>
    <property type="match status" value="1"/>
</dbReference>
<dbReference type="HAMAP" id="MF_00162">
    <property type="entry name" value="GSH_S"/>
    <property type="match status" value="1"/>
</dbReference>
<dbReference type="InterPro" id="IPR011761">
    <property type="entry name" value="ATP-grasp"/>
</dbReference>
<dbReference type="InterPro" id="IPR013815">
    <property type="entry name" value="ATP_grasp_subdomain_1"/>
</dbReference>
<dbReference type="InterPro" id="IPR006284">
    <property type="entry name" value="Glut_synth_pro"/>
</dbReference>
<dbReference type="InterPro" id="IPR004218">
    <property type="entry name" value="GSHS_ATP-bd"/>
</dbReference>
<dbReference type="InterPro" id="IPR004215">
    <property type="entry name" value="GSHS_N"/>
</dbReference>
<dbReference type="InterPro" id="IPR016185">
    <property type="entry name" value="PreATP-grasp_dom_sf"/>
</dbReference>
<dbReference type="NCBIfam" id="TIGR01380">
    <property type="entry name" value="glut_syn"/>
    <property type="match status" value="1"/>
</dbReference>
<dbReference type="NCBIfam" id="NF003573">
    <property type="entry name" value="PRK05246.1"/>
    <property type="match status" value="1"/>
</dbReference>
<dbReference type="PANTHER" id="PTHR21621:SF4">
    <property type="entry name" value="GLUTATHIONE SYNTHETASE"/>
    <property type="match status" value="1"/>
</dbReference>
<dbReference type="PANTHER" id="PTHR21621">
    <property type="entry name" value="RIBOSOMAL PROTEIN S6 MODIFICATION PROTEIN"/>
    <property type="match status" value="1"/>
</dbReference>
<dbReference type="Pfam" id="PF02955">
    <property type="entry name" value="GSH-S_ATP"/>
    <property type="match status" value="1"/>
</dbReference>
<dbReference type="Pfam" id="PF02951">
    <property type="entry name" value="GSH-S_N"/>
    <property type="match status" value="1"/>
</dbReference>
<dbReference type="SUPFAM" id="SSF56059">
    <property type="entry name" value="Glutathione synthetase ATP-binding domain-like"/>
    <property type="match status" value="1"/>
</dbReference>
<dbReference type="SUPFAM" id="SSF52440">
    <property type="entry name" value="PreATP-grasp domain"/>
    <property type="match status" value="1"/>
</dbReference>
<dbReference type="PROSITE" id="PS50975">
    <property type="entry name" value="ATP_GRASP"/>
    <property type="match status" value="1"/>
</dbReference>
<accession>Q87LK1</accession>
<proteinExistence type="inferred from homology"/>
<protein>
    <recommendedName>
        <fullName evidence="2">Glutathione synthetase</fullName>
        <ecNumber evidence="2">6.3.2.3</ecNumber>
    </recommendedName>
    <alternativeName>
        <fullName evidence="2">GSH synthetase</fullName>
        <shortName evidence="2">GSH-S</shortName>
        <shortName evidence="2">GSHase</shortName>
    </alternativeName>
    <alternativeName>
        <fullName evidence="2">Glutathione synthase</fullName>
    </alternativeName>
</protein>
<organism>
    <name type="scientific">Vibrio parahaemolyticus serotype O3:K6 (strain RIMD 2210633)</name>
    <dbReference type="NCBI Taxonomy" id="223926"/>
    <lineage>
        <taxon>Bacteria</taxon>
        <taxon>Pseudomonadati</taxon>
        <taxon>Pseudomonadota</taxon>
        <taxon>Gammaproteobacteria</taxon>
        <taxon>Vibrionales</taxon>
        <taxon>Vibrionaceae</taxon>
        <taxon>Vibrio</taxon>
    </lineage>
</organism>
<gene>
    <name evidence="2" type="primary">gshB</name>
    <name type="ordered locus">VP2611</name>
</gene>
<comment type="catalytic activity">
    <reaction evidence="2">
        <text>gamma-L-glutamyl-L-cysteine + glycine + ATP = glutathione + ADP + phosphate + H(+)</text>
        <dbReference type="Rhea" id="RHEA:13557"/>
        <dbReference type="ChEBI" id="CHEBI:15378"/>
        <dbReference type="ChEBI" id="CHEBI:30616"/>
        <dbReference type="ChEBI" id="CHEBI:43474"/>
        <dbReference type="ChEBI" id="CHEBI:57305"/>
        <dbReference type="ChEBI" id="CHEBI:57925"/>
        <dbReference type="ChEBI" id="CHEBI:58173"/>
        <dbReference type="ChEBI" id="CHEBI:456216"/>
        <dbReference type="EC" id="6.3.2.3"/>
    </reaction>
</comment>
<comment type="cofactor">
    <cofactor evidence="1">
        <name>Mg(2+)</name>
        <dbReference type="ChEBI" id="CHEBI:18420"/>
    </cofactor>
    <cofactor evidence="1">
        <name>Mn(2+)</name>
        <dbReference type="ChEBI" id="CHEBI:29035"/>
    </cofactor>
    <text evidence="1">Binds 1 Mg(2+) or Mn(2+) ion per subunit.</text>
</comment>
<comment type="pathway">
    <text evidence="2">Sulfur metabolism; glutathione biosynthesis; glutathione from L-cysteine and L-glutamate: step 2/2.</text>
</comment>
<comment type="similarity">
    <text evidence="2">Belongs to the prokaryotic GSH synthase family.</text>
</comment>
<name>GSHB_VIBPA</name>
<feature type="chain" id="PRO_0000197492" description="Glutathione synthetase">
    <location>
        <begin position="1"/>
        <end position="316"/>
    </location>
</feature>
<feature type="domain" description="ATP-grasp" evidence="2">
    <location>
        <begin position="124"/>
        <end position="310"/>
    </location>
</feature>
<feature type="binding site" evidence="2">
    <location>
        <begin position="150"/>
        <end position="207"/>
    </location>
    <ligand>
        <name>ATP</name>
        <dbReference type="ChEBI" id="CHEBI:30616"/>
    </ligand>
</feature>
<feature type="binding site" evidence="2">
    <location>
        <position position="281"/>
    </location>
    <ligand>
        <name>Mg(2+)</name>
        <dbReference type="ChEBI" id="CHEBI:18420"/>
    </ligand>
</feature>
<feature type="binding site" evidence="2">
    <location>
        <position position="283"/>
    </location>
    <ligand>
        <name>Mg(2+)</name>
        <dbReference type="ChEBI" id="CHEBI:18420"/>
    </ligand>
</feature>
<sequence>MIKLGIVMDPISSINIKKDSSFAMMLEAQRRGYEIHYMEMNDLHLDQGKAIADTKVVELKEDPNGWYEFKSEQMIELSELDAVLMRKDPPFDTEYIYATYILERAEEQGALIVNKPQSLRDCNEKLFTAWFPELTPTTIVTRKAEKIKAFREEHGDVILKPLDGMGGASIFRVKENDPNVSVIIETLTNHGQNYAMAQTFVPDISNGDKRILVVDGEPMPYCLARIPAKGETRGNLAAGGTGEARPLSETDMKIAQAVAPTLKEKGLIFVGLDVIGDKLTEINVTSPTCIREIEAAFDISITGKLMDAIERRVKGE</sequence>